<protein>
    <recommendedName>
        <fullName evidence="1">Tryptophan--tRNA ligase</fullName>
        <ecNumber evidence="1">6.1.1.2</ecNumber>
    </recommendedName>
    <alternativeName>
        <fullName evidence="1">Tryptophanyl-tRNA synthetase</fullName>
        <shortName evidence="1">TrpRS</shortName>
    </alternativeName>
</protein>
<proteinExistence type="inferred from homology"/>
<comment type="function">
    <text evidence="1">Catalyzes the attachment of tryptophan to tRNA(Trp).</text>
</comment>
<comment type="catalytic activity">
    <reaction evidence="1">
        <text>tRNA(Trp) + L-tryptophan + ATP = L-tryptophyl-tRNA(Trp) + AMP + diphosphate + H(+)</text>
        <dbReference type="Rhea" id="RHEA:24080"/>
        <dbReference type="Rhea" id="RHEA-COMP:9671"/>
        <dbReference type="Rhea" id="RHEA-COMP:9705"/>
        <dbReference type="ChEBI" id="CHEBI:15378"/>
        <dbReference type="ChEBI" id="CHEBI:30616"/>
        <dbReference type="ChEBI" id="CHEBI:33019"/>
        <dbReference type="ChEBI" id="CHEBI:57912"/>
        <dbReference type="ChEBI" id="CHEBI:78442"/>
        <dbReference type="ChEBI" id="CHEBI:78535"/>
        <dbReference type="ChEBI" id="CHEBI:456215"/>
        <dbReference type="EC" id="6.1.1.2"/>
    </reaction>
</comment>
<comment type="subunit">
    <text evidence="1">Homodimer.</text>
</comment>
<comment type="subcellular location">
    <subcellularLocation>
        <location evidence="1">Cytoplasm</location>
    </subcellularLocation>
</comment>
<comment type="similarity">
    <text evidence="1">Belongs to the class-I aminoacyl-tRNA synthetase family.</text>
</comment>
<reference key="1">
    <citation type="journal article" date="2001" name="J. Bacteriol.">
        <title>Genome of the bacterium Streptococcus pneumoniae strain R6.</title>
        <authorList>
            <person name="Hoskins J."/>
            <person name="Alborn W.E. Jr."/>
            <person name="Arnold J."/>
            <person name="Blaszczak L.C."/>
            <person name="Burgett S."/>
            <person name="DeHoff B.S."/>
            <person name="Estrem S.T."/>
            <person name="Fritz L."/>
            <person name="Fu D.-J."/>
            <person name="Fuller W."/>
            <person name="Geringer C."/>
            <person name="Gilmour R."/>
            <person name="Glass J.S."/>
            <person name="Khoja H."/>
            <person name="Kraft A.R."/>
            <person name="Lagace R.E."/>
            <person name="LeBlanc D.J."/>
            <person name="Lee L.N."/>
            <person name="Lefkowitz E.J."/>
            <person name="Lu J."/>
            <person name="Matsushima P."/>
            <person name="McAhren S.M."/>
            <person name="McHenney M."/>
            <person name="McLeaster K."/>
            <person name="Mundy C.W."/>
            <person name="Nicas T.I."/>
            <person name="Norris F.H."/>
            <person name="O'Gara M."/>
            <person name="Peery R.B."/>
            <person name="Robertson G.T."/>
            <person name="Rockey P."/>
            <person name="Sun P.-M."/>
            <person name="Winkler M.E."/>
            <person name="Yang Y."/>
            <person name="Young-Bellido M."/>
            <person name="Zhao G."/>
            <person name="Zook C.A."/>
            <person name="Baltz R.H."/>
            <person name="Jaskunas S.R."/>
            <person name="Rosteck P.R. Jr."/>
            <person name="Skatrud P.L."/>
            <person name="Glass J.I."/>
        </authorList>
    </citation>
    <scope>NUCLEOTIDE SEQUENCE [LARGE SCALE GENOMIC DNA]</scope>
    <source>
        <strain>ATCC BAA-255 / R6</strain>
    </source>
</reference>
<accession>P67596</accession>
<accession>Q97N42</accession>
<feature type="chain" id="PRO_0000136691" description="Tryptophan--tRNA ligase">
    <location>
        <begin position="1"/>
        <end position="341"/>
    </location>
</feature>
<feature type="short sequence motif" description="'HIGH' region" evidence="1">
    <location>
        <begin position="12"/>
        <end position="20"/>
    </location>
</feature>
<feature type="short sequence motif" description="'KMSKS' region" evidence="1">
    <location>
        <begin position="202"/>
        <end position="206"/>
    </location>
</feature>
<feature type="binding site" evidence="1">
    <location>
        <begin position="11"/>
        <end position="13"/>
    </location>
    <ligand>
        <name>ATP</name>
        <dbReference type="ChEBI" id="CHEBI:30616"/>
    </ligand>
</feature>
<feature type="binding site" evidence="1">
    <location>
        <begin position="19"/>
        <end position="20"/>
    </location>
    <ligand>
        <name>ATP</name>
        <dbReference type="ChEBI" id="CHEBI:30616"/>
    </ligand>
</feature>
<feature type="binding site" evidence="1">
    <location>
        <position position="140"/>
    </location>
    <ligand>
        <name>L-tryptophan</name>
        <dbReference type="ChEBI" id="CHEBI:57912"/>
    </ligand>
</feature>
<feature type="binding site" evidence="1">
    <location>
        <begin position="152"/>
        <end position="154"/>
    </location>
    <ligand>
        <name>ATP</name>
        <dbReference type="ChEBI" id="CHEBI:30616"/>
    </ligand>
</feature>
<feature type="binding site" evidence="1">
    <location>
        <position position="194"/>
    </location>
    <ligand>
        <name>ATP</name>
        <dbReference type="ChEBI" id="CHEBI:30616"/>
    </ligand>
</feature>
<feature type="binding site" evidence="1">
    <location>
        <begin position="202"/>
        <end position="206"/>
    </location>
    <ligand>
        <name>ATP</name>
        <dbReference type="ChEBI" id="CHEBI:30616"/>
    </ligand>
</feature>
<evidence type="ECO:0000255" key="1">
    <source>
        <dbReference type="HAMAP-Rule" id="MF_00140"/>
    </source>
</evidence>
<gene>
    <name evidence="1" type="primary">trpS</name>
    <name type="ordered locus">spr2034</name>
</gene>
<name>SYW_STRR6</name>
<sequence>MTKPIILTGDRPTGKLHIGHYVGSLKNRVLLQEEDKYDMFVFLADQQALTDHAKDPQTIVESIGNVALDYLAVGLDPNKSTIFIQSQIPELAELSMYYMNLVSLARLERNPTVKTEISQKGFGESIPTGFLVYPIAQAADITAFKANYVPVGTDQKPMIEQTREIVRSFNNAYNCDVLVEPEGIYPENERAGRLPGLDGNAKMSKSLNNGIYLADDADTLRKKVMSMYTDPDHIRVEDPGKIEGNMVFHYLDVFGRPEDAQEIADMKERYQRGGLGDVKTKRYLLEILERELGPIRERRIEFAKDMGEVYNMIQKGSERAREVAGQTLSEVKGAMGLHYFN</sequence>
<keyword id="KW-0030">Aminoacyl-tRNA synthetase</keyword>
<keyword id="KW-0067">ATP-binding</keyword>
<keyword id="KW-0963">Cytoplasm</keyword>
<keyword id="KW-0436">Ligase</keyword>
<keyword id="KW-0547">Nucleotide-binding</keyword>
<keyword id="KW-0648">Protein biosynthesis</keyword>
<keyword id="KW-1185">Reference proteome</keyword>
<dbReference type="EC" id="6.1.1.2" evidence="1"/>
<dbReference type="EMBL" id="AE007317">
    <property type="protein sequence ID" value="AAL00836.1"/>
    <property type="molecule type" value="Genomic_DNA"/>
</dbReference>
<dbReference type="PIR" id="G98125">
    <property type="entry name" value="G98125"/>
</dbReference>
<dbReference type="RefSeq" id="NP_359625.1">
    <property type="nucleotide sequence ID" value="NC_003098.1"/>
</dbReference>
<dbReference type="RefSeq" id="WP_000165444.1">
    <property type="nucleotide sequence ID" value="NC_003098.1"/>
</dbReference>
<dbReference type="SMR" id="P67596"/>
<dbReference type="STRING" id="171101.spr2034"/>
<dbReference type="GeneID" id="45652551"/>
<dbReference type="KEGG" id="spr:spr2034"/>
<dbReference type="PATRIC" id="fig|171101.6.peg.2200"/>
<dbReference type="eggNOG" id="COG0180">
    <property type="taxonomic scope" value="Bacteria"/>
</dbReference>
<dbReference type="HOGENOM" id="CLU_029244_0_1_9"/>
<dbReference type="Proteomes" id="UP000000586">
    <property type="component" value="Chromosome"/>
</dbReference>
<dbReference type="GO" id="GO:0005737">
    <property type="term" value="C:cytoplasm"/>
    <property type="evidence" value="ECO:0000318"/>
    <property type="project" value="GO_Central"/>
</dbReference>
<dbReference type="GO" id="GO:0005524">
    <property type="term" value="F:ATP binding"/>
    <property type="evidence" value="ECO:0007669"/>
    <property type="project" value="UniProtKB-UniRule"/>
</dbReference>
<dbReference type="GO" id="GO:0004830">
    <property type="term" value="F:tryptophan-tRNA ligase activity"/>
    <property type="evidence" value="ECO:0000318"/>
    <property type="project" value="GO_Central"/>
</dbReference>
<dbReference type="GO" id="GO:0006436">
    <property type="term" value="P:tryptophanyl-tRNA aminoacylation"/>
    <property type="evidence" value="ECO:0000318"/>
    <property type="project" value="GO_Central"/>
</dbReference>
<dbReference type="CDD" id="cd00806">
    <property type="entry name" value="TrpRS_core"/>
    <property type="match status" value="1"/>
</dbReference>
<dbReference type="FunFam" id="1.10.240.10:FF:000005">
    <property type="entry name" value="Tryptophan--tRNA ligase"/>
    <property type="match status" value="1"/>
</dbReference>
<dbReference type="FunFam" id="3.40.50.620:FF:000094">
    <property type="entry name" value="Tryptophan--tRNA ligase"/>
    <property type="match status" value="1"/>
</dbReference>
<dbReference type="Gene3D" id="3.40.50.620">
    <property type="entry name" value="HUPs"/>
    <property type="match status" value="1"/>
</dbReference>
<dbReference type="Gene3D" id="1.10.240.10">
    <property type="entry name" value="Tyrosyl-Transfer RNA Synthetase"/>
    <property type="match status" value="1"/>
</dbReference>
<dbReference type="HAMAP" id="MF_00140_B">
    <property type="entry name" value="Trp_tRNA_synth_B"/>
    <property type="match status" value="1"/>
</dbReference>
<dbReference type="InterPro" id="IPR001412">
    <property type="entry name" value="aa-tRNA-synth_I_CS"/>
</dbReference>
<dbReference type="InterPro" id="IPR002305">
    <property type="entry name" value="aa-tRNA-synth_Ic"/>
</dbReference>
<dbReference type="InterPro" id="IPR014729">
    <property type="entry name" value="Rossmann-like_a/b/a_fold"/>
</dbReference>
<dbReference type="InterPro" id="IPR002306">
    <property type="entry name" value="Trp-tRNA-ligase"/>
</dbReference>
<dbReference type="InterPro" id="IPR024109">
    <property type="entry name" value="Trp-tRNA-ligase_bac-type"/>
</dbReference>
<dbReference type="InterPro" id="IPR050203">
    <property type="entry name" value="Trp-tRNA_synthetase"/>
</dbReference>
<dbReference type="NCBIfam" id="TIGR00233">
    <property type="entry name" value="trpS"/>
    <property type="match status" value="1"/>
</dbReference>
<dbReference type="PANTHER" id="PTHR43766">
    <property type="entry name" value="TRYPTOPHAN--TRNA LIGASE, MITOCHONDRIAL"/>
    <property type="match status" value="1"/>
</dbReference>
<dbReference type="PANTHER" id="PTHR43766:SF1">
    <property type="entry name" value="TRYPTOPHAN--TRNA LIGASE, MITOCHONDRIAL"/>
    <property type="match status" value="1"/>
</dbReference>
<dbReference type="Pfam" id="PF00579">
    <property type="entry name" value="tRNA-synt_1b"/>
    <property type="match status" value="1"/>
</dbReference>
<dbReference type="PRINTS" id="PR01039">
    <property type="entry name" value="TRNASYNTHTRP"/>
</dbReference>
<dbReference type="SUPFAM" id="SSF52374">
    <property type="entry name" value="Nucleotidylyl transferase"/>
    <property type="match status" value="1"/>
</dbReference>
<dbReference type="PROSITE" id="PS00178">
    <property type="entry name" value="AA_TRNA_LIGASE_I"/>
    <property type="match status" value="1"/>
</dbReference>
<organism>
    <name type="scientific">Streptococcus pneumoniae (strain ATCC BAA-255 / R6)</name>
    <dbReference type="NCBI Taxonomy" id="171101"/>
    <lineage>
        <taxon>Bacteria</taxon>
        <taxon>Bacillati</taxon>
        <taxon>Bacillota</taxon>
        <taxon>Bacilli</taxon>
        <taxon>Lactobacillales</taxon>
        <taxon>Streptococcaceae</taxon>
        <taxon>Streptococcus</taxon>
    </lineage>
</organism>